<accession>P58194</accession>
<feature type="chain" id="PRO_0000157358" description="3-octaprenyl-4-hydroxybenzoate carboxy-lyase">
    <location>
        <begin position="1"/>
        <end position="497"/>
    </location>
</feature>
<feature type="active site" description="Proton donor" evidence="1">
    <location>
        <position position="290"/>
    </location>
</feature>
<feature type="binding site" evidence="1">
    <location>
        <position position="175"/>
    </location>
    <ligand>
        <name>Mn(2+)</name>
        <dbReference type="ChEBI" id="CHEBI:29035"/>
    </ligand>
</feature>
<feature type="binding site" evidence="1">
    <location>
        <begin position="178"/>
        <end position="180"/>
    </location>
    <ligand>
        <name>prenylated FMN</name>
        <dbReference type="ChEBI" id="CHEBI:87746"/>
    </ligand>
</feature>
<feature type="binding site" evidence="1">
    <location>
        <begin position="192"/>
        <end position="194"/>
    </location>
    <ligand>
        <name>prenylated FMN</name>
        <dbReference type="ChEBI" id="CHEBI:87746"/>
    </ligand>
</feature>
<feature type="binding site" evidence="1">
    <location>
        <begin position="197"/>
        <end position="198"/>
    </location>
    <ligand>
        <name>prenylated FMN</name>
        <dbReference type="ChEBI" id="CHEBI:87746"/>
    </ligand>
</feature>
<feature type="binding site" evidence="1">
    <location>
        <position position="241"/>
    </location>
    <ligand>
        <name>Mn(2+)</name>
        <dbReference type="ChEBI" id="CHEBI:29035"/>
    </ligand>
</feature>
<organism>
    <name type="scientific">Escherichia coli O157:H7</name>
    <dbReference type="NCBI Taxonomy" id="83334"/>
    <lineage>
        <taxon>Bacteria</taxon>
        <taxon>Pseudomonadati</taxon>
        <taxon>Pseudomonadota</taxon>
        <taxon>Gammaproteobacteria</taxon>
        <taxon>Enterobacterales</taxon>
        <taxon>Enterobacteriaceae</taxon>
        <taxon>Escherichia</taxon>
    </lineage>
</organism>
<keyword id="KW-1003">Cell membrane</keyword>
<keyword id="KW-0210">Decarboxylase</keyword>
<keyword id="KW-0285">Flavoprotein</keyword>
<keyword id="KW-0288">FMN</keyword>
<keyword id="KW-0456">Lyase</keyword>
<keyword id="KW-0464">Manganese</keyword>
<keyword id="KW-0472">Membrane</keyword>
<keyword id="KW-0479">Metal-binding</keyword>
<keyword id="KW-1185">Reference proteome</keyword>
<keyword id="KW-0831">Ubiquinone biosynthesis</keyword>
<sequence>MDAMKYNDLRDFLTLLEQQGELKRITLPVDPHLEITEIADRTLRAGGPALLFENPKGYSMPVLCNLFGTPKRVAMGMGQEDVSALREVGKLLAFLKEPEPPKGFRDLFDKLPQFKQVLNMPTKRLRGAPCQQKIVSGDDVDLNRIPIMTCWPEDAAPLITWGLTVTRGPHKERQNLGIYRQQLIGKNKLIMRWLSHRGGALDYQEWCAAHPGERFPISVALGADPATILGAVTPVPDTLSEYAFAGLLRGTKTEVVKCISNDLEVPASAEIVLEGYIEQGEMAPEGPYGDHTGYYNEVDSFPVFTVTHITQREDAIYHSTYTGRPPDEPAVLGVALNEVFVPILQKQFPEIVDFYLPPEGCSYRLAVVTIKKQYAGHAKRVMMGVWSFLRQFMYTKFVIVCDDDVNARDWNDVIWAITTRMDPARDTVLVENTPIDYLDFASPVSGLGSKMGLDATNKWPGETQREWGRPIKKDPDVVAHIDAIWDELAIFNNGKSA</sequence>
<evidence type="ECO:0000255" key="1">
    <source>
        <dbReference type="HAMAP-Rule" id="MF_01636"/>
    </source>
</evidence>
<name>UBID_ECO57</name>
<proteinExistence type="inferred from homology"/>
<reference key="1">
    <citation type="journal article" date="2001" name="Nature">
        <title>Genome sequence of enterohaemorrhagic Escherichia coli O157:H7.</title>
        <authorList>
            <person name="Perna N.T."/>
            <person name="Plunkett G. III"/>
            <person name="Burland V."/>
            <person name="Mau B."/>
            <person name="Glasner J.D."/>
            <person name="Rose D.J."/>
            <person name="Mayhew G.F."/>
            <person name="Evans P.S."/>
            <person name="Gregor J."/>
            <person name="Kirkpatrick H.A."/>
            <person name="Posfai G."/>
            <person name="Hackett J."/>
            <person name="Klink S."/>
            <person name="Boutin A."/>
            <person name="Shao Y."/>
            <person name="Miller L."/>
            <person name="Grotbeck E.J."/>
            <person name="Davis N.W."/>
            <person name="Lim A."/>
            <person name="Dimalanta E.T."/>
            <person name="Potamousis K."/>
            <person name="Apodaca J."/>
            <person name="Anantharaman T.S."/>
            <person name="Lin J."/>
            <person name="Yen G."/>
            <person name="Schwartz D.C."/>
            <person name="Welch R.A."/>
            <person name="Blattner F.R."/>
        </authorList>
    </citation>
    <scope>NUCLEOTIDE SEQUENCE [LARGE SCALE GENOMIC DNA]</scope>
    <source>
        <strain>O157:H7 / EDL933 / ATCC 700927 / EHEC</strain>
    </source>
</reference>
<reference key="2">
    <citation type="journal article" date="2001" name="DNA Res.">
        <title>Complete genome sequence of enterohemorrhagic Escherichia coli O157:H7 and genomic comparison with a laboratory strain K-12.</title>
        <authorList>
            <person name="Hayashi T."/>
            <person name="Makino K."/>
            <person name="Ohnishi M."/>
            <person name="Kurokawa K."/>
            <person name="Ishii K."/>
            <person name="Yokoyama K."/>
            <person name="Han C.-G."/>
            <person name="Ohtsubo E."/>
            <person name="Nakayama K."/>
            <person name="Murata T."/>
            <person name="Tanaka M."/>
            <person name="Tobe T."/>
            <person name="Iida T."/>
            <person name="Takami H."/>
            <person name="Honda T."/>
            <person name="Sasakawa C."/>
            <person name="Ogasawara N."/>
            <person name="Yasunaga T."/>
            <person name="Kuhara S."/>
            <person name="Shiba T."/>
            <person name="Hattori M."/>
            <person name="Shinagawa H."/>
        </authorList>
    </citation>
    <scope>NUCLEOTIDE SEQUENCE [LARGE SCALE GENOMIC DNA]</scope>
    <source>
        <strain>O157:H7 / Sakai / RIMD 0509952 / EHEC</strain>
    </source>
</reference>
<dbReference type="EC" id="4.1.1.98" evidence="1"/>
<dbReference type="EMBL" id="AE005174">
    <property type="protein sequence ID" value="AAG59037.1"/>
    <property type="molecule type" value="Genomic_DNA"/>
</dbReference>
<dbReference type="EMBL" id="BA000007">
    <property type="protein sequence ID" value="BAB38194.1"/>
    <property type="molecule type" value="Genomic_DNA"/>
</dbReference>
<dbReference type="PIR" id="A86072">
    <property type="entry name" value="A86072"/>
</dbReference>
<dbReference type="PIR" id="C91225">
    <property type="entry name" value="C91225"/>
</dbReference>
<dbReference type="RefSeq" id="NP_312798.1">
    <property type="nucleotide sequence ID" value="NC_002695.1"/>
</dbReference>
<dbReference type="RefSeq" id="WP_000339792.1">
    <property type="nucleotide sequence ID" value="NZ_VOAI01000017.1"/>
</dbReference>
<dbReference type="SMR" id="P58194"/>
<dbReference type="STRING" id="155864.Z5364"/>
<dbReference type="GeneID" id="915132"/>
<dbReference type="KEGG" id="ece:Z5364"/>
<dbReference type="KEGG" id="ecs:ECs_4771"/>
<dbReference type="PATRIC" id="fig|386585.9.peg.4980"/>
<dbReference type="eggNOG" id="COG0043">
    <property type="taxonomic scope" value="Bacteria"/>
</dbReference>
<dbReference type="HOGENOM" id="CLU_023348_4_1_6"/>
<dbReference type="OMA" id="DWKDVIW"/>
<dbReference type="UniPathway" id="UPA00232"/>
<dbReference type="Proteomes" id="UP000000558">
    <property type="component" value="Chromosome"/>
</dbReference>
<dbReference type="Proteomes" id="UP000002519">
    <property type="component" value="Chromosome"/>
</dbReference>
<dbReference type="GO" id="GO:0005829">
    <property type="term" value="C:cytosol"/>
    <property type="evidence" value="ECO:0007669"/>
    <property type="project" value="TreeGrafter"/>
</dbReference>
<dbReference type="GO" id="GO:0005886">
    <property type="term" value="C:plasma membrane"/>
    <property type="evidence" value="ECO:0007669"/>
    <property type="project" value="UniProtKB-SubCell"/>
</dbReference>
<dbReference type="GO" id="GO:0008694">
    <property type="term" value="F:3-octaprenyl-4-hydroxybenzoate carboxy-lyase activity"/>
    <property type="evidence" value="ECO:0007669"/>
    <property type="project" value="UniProtKB-UniRule"/>
</dbReference>
<dbReference type="GO" id="GO:0046872">
    <property type="term" value="F:metal ion binding"/>
    <property type="evidence" value="ECO:0007669"/>
    <property type="project" value="UniProtKB-KW"/>
</dbReference>
<dbReference type="GO" id="GO:0006744">
    <property type="term" value="P:ubiquinone biosynthetic process"/>
    <property type="evidence" value="ECO:0007669"/>
    <property type="project" value="UniProtKB-UniRule"/>
</dbReference>
<dbReference type="FunFam" id="1.20.5.570:FF:000001">
    <property type="entry name" value="3-octaprenyl-4-hydroxybenzoate carboxy-lyase"/>
    <property type="match status" value="1"/>
</dbReference>
<dbReference type="FunFam" id="3.40.1670.10:FF:000001">
    <property type="entry name" value="3-octaprenyl-4-hydroxybenzoate carboxy-lyase"/>
    <property type="match status" value="1"/>
</dbReference>
<dbReference type="Gene3D" id="1.20.5.570">
    <property type="entry name" value="Single helix bin"/>
    <property type="match status" value="1"/>
</dbReference>
<dbReference type="Gene3D" id="3.40.1670.10">
    <property type="entry name" value="UbiD C-terminal domain-like"/>
    <property type="match status" value="1"/>
</dbReference>
<dbReference type="HAMAP" id="MF_01636">
    <property type="entry name" value="UbiD"/>
    <property type="match status" value="1"/>
</dbReference>
<dbReference type="InterPro" id="IPR002830">
    <property type="entry name" value="UbiD"/>
</dbReference>
<dbReference type="InterPro" id="IPR049381">
    <property type="entry name" value="UbiD-like_C"/>
</dbReference>
<dbReference type="InterPro" id="IPR049383">
    <property type="entry name" value="UbiD-like_N"/>
</dbReference>
<dbReference type="InterPro" id="IPR023677">
    <property type="entry name" value="UbiD_bacteria"/>
</dbReference>
<dbReference type="InterPro" id="IPR048304">
    <property type="entry name" value="UbiD_Rift_dom"/>
</dbReference>
<dbReference type="NCBIfam" id="NF008175">
    <property type="entry name" value="PRK10922.1"/>
    <property type="match status" value="1"/>
</dbReference>
<dbReference type="NCBIfam" id="TIGR00148">
    <property type="entry name" value="UbiD family decarboxylase"/>
    <property type="match status" value="1"/>
</dbReference>
<dbReference type="PANTHER" id="PTHR30108">
    <property type="entry name" value="3-OCTAPRENYL-4-HYDROXYBENZOATE CARBOXY-LYASE-RELATED"/>
    <property type="match status" value="1"/>
</dbReference>
<dbReference type="PANTHER" id="PTHR30108:SF17">
    <property type="entry name" value="FERULIC ACID DECARBOXYLASE 1"/>
    <property type="match status" value="1"/>
</dbReference>
<dbReference type="Pfam" id="PF01977">
    <property type="entry name" value="UbiD"/>
    <property type="match status" value="1"/>
</dbReference>
<dbReference type="Pfam" id="PF20696">
    <property type="entry name" value="UbiD_C"/>
    <property type="match status" value="1"/>
</dbReference>
<dbReference type="Pfam" id="PF20695">
    <property type="entry name" value="UbiD_N"/>
    <property type="match status" value="1"/>
</dbReference>
<dbReference type="SUPFAM" id="SSF50475">
    <property type="entry name" value="FMN-binding split barrel"/>
    <property type="match status" value="1"/>
</dbReference>
<dbReference type="SUPFAM" id="SSF143968">
    <property type="entry name" value="UbiD C-terminal domain-like"/>
    <property type="match status" value="1"/>
</dbReference>
<comment type="function">
    <text evidence="1">Catalyzes the decarboxylation of 3-octaprenyl-4-hydroxy benzoate to 2-octaprenylphenol, an intermediate step in ubiquinone biosynthesis.</text>
</comment>
<comment type="catalytic activity">
    <reaction evidence="1">
        <text>a 4-hydroxy-3-(all-trans-polyprenyl)benzoate + H(+) = a 2-(all-trans-polyprenyl)phenol + CO2</text>
        <dbReference type="Rhea" id="RHEA:41680"/>
        <dbReference type="Rhea" id="RHEA-COMP:9514"/>
        <dbReference type="Rhea" id="RHEA-COMP:9516"/>
        <dbReference type="ChEBI" id="CHEBI:1269"/>
        <dbReference type="ChEBI" id="CHEBI:15378"/>
        <dbReference type="ChEBI" id="CHEBI:16526"/>
        <dbReference type="ChEBI" id="CHEBI:78396"/>
        <dbReference type="EC" id="4.1.1.98"/>
    </reaction>
</comment>
<comment type="cofactor">
    <cofactor evidence="1">
        <name>prenylated FMN</name>
        <dbReference type="ChEBI" id="CHEBI:87746"/>
    </cofactor>
    <text evidence="1">Binds 1 prenylated FMN per subunit.</text>
</comment>
<comment type="cofactor">
    <cofactor evidence="1">
        <name>Mn(2+)</name>
        <dbReference type="ChEBI" id="CHEBI:29035"/>
    </cofactor>
</comment>
<comment type="pathway">
    <text evidence="1">Cofactor biosynthesis; ubiquinone biosynthesis.</text>
</comment>
<comment type="subunit">
    <text evidence="1">Homohexamer.</text>
</comment>
<comment type="subcellular location">
    <subcellularLocation>
        <location evidence="1">Cell membrane</location>
        <topology evidence="1">Peripheral membrane protein</topology>
    </subcellularLocation>
</comment>
<comment type="similarity">
    <text evidence="1">Belongs to the UbiD family.</text>
</comment>
<gene>
    <name evidence="1" type="primary">ubiD</name>
    <name type="ordered locus">Z5364</name>
    <name type="ordered locus">ECs4771</name>
</gene>
<protein>
    <recommendedName>
        <fullName evidence="1">3-octaprenyl-4-hydroxybenzoate carboxy-lyase</fullName>
        <ecNumber evidence="1">4.1.1.98</ecNumber>
    </recommendedName>
    <alternativeName>
        <fullName evidence="1">Polyprenyl p-hydroxybenzoate decarboxylase</fullName>
    </alternativeName>
</protein>